<name>BLM_XENLA</name>
<proteinExistence type="evidence at transcript level"/>
<protein>
    <recommendedName>
        <fullName evidence="8">RecQ-like DNA helicase BLM</fullName>
        <ecNumber evidence="2">5.6.2.4</ecNumber>
    </recommendedName>
    <alternativeName>
        <fullName>Bloom syndrome protein homolog</fullName>
        <shortName>xBLM</shortName>
    </alternativeName>
    <alternativeName>
        <fullName evidence="8">DNA 3'-5' helicase BLM</fullName>
    </alternativeName>
    <alternativeName>
        <fullName>RecQ helicase homolog</fullName>
    </alternativeName>
</protein>
<dbReference type="EC" id="5.6.2.4" evidence="2"/>
<dbReference type="EMBL" id="AF307841">
    <property type="protein sequence ID" value="AAG30928.1"/>
    <property type="molecule type" value="mRNA"/>
</dbReference>
<dbReference type="RefSeq" id="NP_001079095.1">
    <property type="nucleotide sequence ID" value="NM_001085626.1"/>
</dbReference>
<dbReference type="SMR" id="Q9DEY9"/>
<dbReference type="BioGRID" id="96849">
    <property type="interactions" value="1"/>
</dbReference>
<dbReference type="GeneID" id="373628"/>
<dbReference type="KEGG" id="xla:373628"/>
<dbReference type="AGR" id="Xenbase:XB-GENE-982565"/>
<dbReference type="CTD" id="373628"/>
<dbReference type="Xenbase" id="XB-GENE-982565">
    <property type="gene designation" value="blm.S"/>
</dbReference>
<dbReference type="OrthoDB" id="10261556at2759"/>
<dbReference type="Proteomes" id="UP000186698">
    <property type="component" value="Chromosome 3S"/>
</dbReference>
<dbReference type="Bgee" id="373628">
    <property type="expression patterns" value="Expressed in blastula and 18 other cell types or tissues"/>
</dbReference>
<dbReference type="GO" id="GO:0005694">
    <property type="term" value="C:chromosome"/>
    <property type="evidence" value="ECO:0000318"/>
    <property type="project" value="GO_Central"/>
</dbReference>
<dbReference type="GO" id="GO:0005737">
    <property type="term" value="C:cytoplasm"/>
    <property type="evidence" value="ECO:0000318"/>
    <property type="project" value="GO_Central"/>
</dbReference>
<dbReference type="GO" id="GO:0005634">
    <property type="term" value="C:nucleus"/>
    <property type="evidence" value="ECO:0000318"/>
    <property type="project" value="GO_Central"/>
</dbReference>
<dbReference type="GO" id="GO:0043138">
    <property type="term" value="F:3'-5' DNA helicase activity"/>
    <property type="evidence" value="ECO:0000318"/>
    <property type="project" value="GO_Central"/>
</dbReference>
<dbReference type="GO" id="GO:0005524">
    <property type="term" value="F:ATP binding"/>
    <property type="evidence" value="ECO:0000250"/>
    <property type="project" value="UniProtKB"/>
</dbReference>
<dbReference type="GO" id="GO:0016887">
    <property type="term" value="F:ATP hydrolysis activity"/>
    <property type="evidence" value="ECO:0007669"/>
    <property type="project" value="RHEA"/>
</dbReference>
<dbReference type="GO" id="GO:0008094">
    <property type="term" value="F:ATP-dependent activity, acting on DNA"/>
    <property type="evidence" value="ECO:0000250"/>
    <property type="project" value="UniProtKB"/>
</dbReference>
<dbReference type="GO" id="GO:0003677">
    <property type="term" value="F:DNA binding"/>
    <property type="evidence" value="ECO:0000250"/>
    <property type="project" value="UniProtKB"/>
</dbReference>
<dbReference type="GO" id="GO:0003678">
    <property type="term" value="F:DNA helicase activity"/>
    <property type="evidence" value="ECO:0000250"/>
    <property type="project" value="UniProtKB"/>
</dbReference>
<dbReference type="GO" id="GO:0061749">
    <property type="term" value="F:forked DNA-dependent helicase activity"/>
    <property type="evidence" value="ECO:0000250"/>
    <property type="project" value="UniProtKB"/>
</dbReference>
<dbReference type="GO" id="GO:0000400">
    <property type="term" value="F:four-way junction DNA binding"/>
    <property type="evidence" value="ECO:0000250"/>
    <property type="project" value="UniProtKB"/>
</dbReference>
<dbReference type="GO" id="GO:0009378">
    <property type="term" value="F:four-way junction helicase activity"/>
    <property type="evidence" value="ECO:0000250"/>
    <property type="project" value="UniProtKB"/>
</dbReference>
<dbReference type="GO" id="GO:0042803">
    <property type="term" value="F:protein homodimerization activity"/>
    <property type="evidence" value="ECO:0000250"/>
    <property type="project" value="UniProtKB"/>
</dbReference>
<dbReference type="GO" id="GO:0003697">
    <property type="term" value="F:single-stranded DNA binding"/>
    <property type="evidence" value="ECO:0000250"/>
    <property type="project" value="UniProtKB"/>
</dbReference>
<dbReference type="GO" id="GO:0008270">
    <property type="term" value="F:zinc ion binding"/>
    <property type="evidence" value="ECO:0000250"/>
    <property type="project" value="UniProtKB"/>
</dbReference>
<dbReference type="GO" id="GO:0000729">
    <property type="term" value="P:DNA double-strand break processing"/>
    <property type="evidence" value="ECO:0000250"/>
    <property type="project" value="UniProtKB"/>
</dbReference>
<dbReference type="GO" id="GO:0006260">
    <property type="term" value="P:DNA replication"/>
    <property type="evidence" value="ECO:0000318"/>
    <property type="project" value="GO_Central"/>
</dbReference>
<dbReference type="GO" id="GO:0000724">
    <property type="term" value="P:double-strand break repair via homologous recombination"/>
    <property type="evidence" value="ECO:0000318"/>
    <property type="project" value="GO_Central"/>
</dbReference>
<dbReference type="GO" id="GO:0051259">
    <property type="term" value="P:protein complex oligomerization"/>
    <property type="evidence" value="ECO:0000250"/>
    <property type="project" value="UniProtKB"/>
</dbReference>
<dbReference type="GO" id="GO:0051260">
    <property type="term" value="P:protein homooligomerization"/>
    <property type="evidence" value="ECO:0000250"/>
    <property type="project" value="UniProtKB"/>
</dbReference>
<dbReference type="GO" id="GO:0000723">
    <property type="term" value="P:telomere maintenance"/>
    <property type="evidence" value="ECO:0000318"/>
    <property type="project" value="GO_Central"/>
</dbReference>
<dbReference type="CDD" id="cd18016">
    <property type="entry name" value="DEXHc_RecQ2_BLM"/>
    <property type="match status" value="1"/>
</dbReference>
<dbReference type="CDD" id="cd18794">
    <property type="entry name" value="SF2_C_RecQ"/>
    <property type="match status" value="1"/>
</dbReference>
<dbReference type="FunFam" id="1.10.150.80:FF:000003">
    <property type="entry name" value="Bloom syndrome RecQ-like helicase"/>
    <property type="match status" value="1"/>
</dbReference>
<dbReference type="FunFam" id="3.40.50.300:FF:000537">
    <property type="entry name" value="Bloom syndrome RecQ-like helicase"/>
    <property type="match status" value="1"/>
</dbReference>
<dbReference type="FunFam" id="3.40.50.300:FF:000340">
    <property type="entry name" value="Bloom syndrome, RecQ helicase"/>
    <property type="match status" value="1"/>
</dbReference>
<dbReference type="Gene3D" id="1.10.150.80">
    <property type="entry name" value="HRDC domain"/>
    <property type="match status" value="1"/>
</dbReference>
<dbReference type="Gene3D" id="3.40.50.300">
    <property type="entry name" value="P-loop containing nucleotide triphosphate hydrolases"/>
    <property type="match status" value="2"/>
</dbReference>
<dbReference type="Gene3D" id="1.10.10.10">
    <property type="entry name" value="Winged helix-like DNA-binding domain superfamily/Winged helix DNA-binding domain"/>
    <property type="match status" value="1"/>
</dbReference>
<dbReference type="InterPro" id="IPR012532">
    <property type="entry name" value="BDHCT"/>
</dbReference>
<dbReference type="InterPro" id="IPR032437">
    <property type="entry name" value="BLM_N"/>
</dbReference>
<dbReference type="InterPro" id="IPR011545">
    <property type="entry name" value="DEAD/DEAH_box_helicase_dom"/>
</dbReference>
<dbReference type="InterPro" id="IPR002464">
    <property type="entry name" value="DNA/RNA_helicase_DEAH_CS"/>
</dbReference>
<dbReference type="InterPro" id="IPR004589">
    <property type="entry name" value="DNA_helicase_ATP-dep_RecQ"/>
</dbReference>
<dbReference type="InterPro" id="IPR014001">
    <property type="entry name" value="Helicase_ATP-bd"/>
</dbReference>
<dbReference type="InterPro" id="IPR001650">
    <property type="entry name" value="Helicase_C-like"/>
</dbReference>
<dbReference type="InterPro" id="IPR010997">
    <property type="entry name" value="HRDC-like_sf"/>
</dbReference>
<dbReference type="InterPro" id="IPR002121">
    <property type="entry name" value="HRDC_dom"/>
</dbReference>
<dbReference type="InterPro" id="IPR044876">
    <property type="entry name" value="HRDC_dom_sf"/>
</dbReference>
<dbReference type="InterPro" id="IPR027417">
    <property type="entry name" value="P-loop_NTPase"/>
</dbReference>
<dbReference type="InterPro" id="IPR032284">
    <property type="entry name" value="RecQ_Zn-bd"/>
</dbReference>
<dbReference type="InterPro" id="IPR018982">
    <property type="entry name" value="RQC_domain"/>
</dbReference>
<dbReference type="InterPro" id="IPR036388">
    <property type="entry name" value="WH-like_DNA-bd_sf"/>
</dbReference>
<dbReference type="InterPro" id="IPR036390">
    <property type="entry name" value="WH_DNA-bd_sf"/>
</dbReference>
<dbReference type="NCBIfam" id="TIGR00614">
    <property type="entry name" value="recQ_fam"/>
    <property type="match status" value="1"/>
</dbReference>
<dbReference type="PANTHER" id="PTHR13710">
    <property type="entry name" value="DNA HELICASE RECQ FAMILY MEMBER"/>
    <property type="match status" value="1"/>
</dbReference>
<dbReference type="PANTHER" id="PTHR13710:SF153">
    <property type="entry name" value="RECQ-LIKE DNA HELICASE BLM"/>
    <property type="match status" value="1"/>
</dbReference>
<dbReference type="Pfam" id="PF08072">
    <property type="entry name" value="BDHCT"/>
    <property type="match status" value="1"/>
</dbReference>
<dbReference type="Pfam" id="PF16202">
    <property type="entry name" value="BLM_N"/>
    <property type="match status" value="1"/>
</dbReference>
<dbReference type="Pfam" id="PF00270">
    <property type="entry name" value="DEAD"/>
    <property type="match status" value="1"/>
</dbReference>
<dbReference type="Pfam" id="PF00271">
    <property type="entry name" value="Helicase_C"/>
    <property type="match status" value="1"/>
</dbReference>
<dbReference type="Pfam" id="PF00570">
    <property type="entry name" value="HRDC"/>
    <property type="match status" value="1"/>
</dbReference>
<dbReference type="Pfam" id="PF16124">
    <property type="entry name" value="RecQ_Zn_bind"/>
    <property type="match status" value="1"/>
</dbReference>
<dbReference type="Pfam" id="PF09382">
    <property type="entry name" value="RQC"/>
    <property type="match status" value="1"/>
</dbReference>
<dbReference type="SMART" id="SM00487">
    <property type="entry name" value="DEXDc"/>
    <property type="match status" value="1"/>
</dbReference>
<dbReference type="SMART" id="SM00490">
    <property type="entry name" value="HELICc"/>
    <property type="match status" value="1"/>
</dbReference>
<dbReference type="SMART" id="SM00341">
    <property type="entry name" value="HRDC"/>
    <property type="match status" value="1"/>
</dbReference>
<dbReference type="SMART" id="SM00956">
    <property type="entry name" value="RQC"/>
    <property type="match status" value="1"/>
</dbReference>
<dbReference type="SUPFAM" id="SSF47819">
    <property type="entry name" value="HRDC-like"/>
    <property type="match status" value="1"/>
</dbReference>
<dbReference type="SUPFAM" id="SSF52540">
    <property type="entry name" value="P-loop containing nucleoside triphosphate hydrolases"/>
    <property type="match status" value="2"/>
</dbReference>
<dbReference type="SUPFAM" id="SSF46785">
    <property type="entry name" value="Winged helix' DNA-binding domain"/>
    <property type="match status" value="1"/>
</dbReference>
<dbReference type="PROSITE" id="PS00690">
    <property type="entry name" value="DEAH_ATP_HELICASE"/>
    <property type="match status" value="1"/>
</dbReference>
<dbReference type="PROSITE" id="PS51192">
    <property type="entry name" value="HELICASE_ATP_BIND_1"/>
    <property type="match status" value="1"/>
</dbReference>
<dbReference type="PROSITE" id="PS51194">
    <property type="entry name" value="HELICASE_CTER"/>
    <property type="match status" value="1"/>
</dbReference>
<dbReference type="PROSITE" id="PS50967">
    <property type="entry name" value="HRDC"/>
    <property type="match status" value="1"/>
</dbReference>
<feature type="chain" id="PRO_0000205042" description="RecQ-like DNA helicase BLM">
    <location>
        <begin position="1"/>
        <end position="1364"/>
    </location>
</feature>
<feature type="domain" description="Helicase ATP-binding" evidence="2 4">
    <location>
        <begin position="628"/>
        <end position="803"/>
    </location>
</feature>
<feature type="domain" description="Helicase C-terminal" evidence="2 5">
    <location>
        <begin position="829"/>
        <end position="976"/>
    </location>
</feature>
<feature type="domain" description="HRDC" evidence="2 3">
    <location>
        <begin position="1164"/>
        <end position="1244"/>
    </location>
</feature>
<feature type="region of interest" description="Disordered" evidence="6">
    <location>
        <begin position="108"/>
        <end position="131"/>
    </location>
</feature>
<feature type="region of interest" description="Disordered" evidence="6">
    <location>
        <begin position="147"/>
        <end position="174"/>
    </location>
</feature>
<feature type="region of interest" description="Necessary for dimerization and homooligomerization" evidence="2">
    <location>
        <begin position="328"/>
        <end position="377"/>
    </location>
</feature>
<feature type="region of interest" description="Disordered" evidence="6">
    <location>
        <begin position="380"/>
        <end position="416"/>
    </location>
</feature>
<feature type="region of interest" description="Disordered" evidence="6">
    <location>
        <begin position="484"/>
        <end position="515"/>
    </location>
</feature>
<feature type="region of interest" description="Disordered" evidence="6">
    <location>
        <begin position="535"/>
        <end position="580"/>
    </location>
</feature>
<feature type="region of interest" description="3' overhang DNA-binding" evidence="2">
    <location>
        <begin position="822"/>
        <end position="825"/>
    </location>
</feature>
<feature type="region of interest" description="3' overhang DNA-binding" evidence="2">
    <location>
        <begin position="849"/>
        <end position="851"/>
    </location>
</feature>
<feature type="region of interest" description="3' overhang DNA-binding" evidence="2">
    <location>
        <begin position="952"/>
        <end position="955"/>
    </location>
</feature>
<feature type="region of interest" description="DNA Holliday junction binding" evidence="2">
    <location>
        <begin position="1046"/>
        <end position="1090"/>
    </location>
</feature>
<feature type="region of interest" description="3' overhang DNA-binding" evidence="2">
    <location>
        <begin position="1061"/>
        <end position="1063"/>
    </location>
</feature>
<feature type="region of interest" description="3' overhang DNA-binding" evidence="2">
    <location>
        <begin position="1072"/>
        <end position="1076"/>
    </location>
</feature>
<feature type="region of interest" description="3' overhang DNA-binding" evidence="2">
    <location>
        <begin position="1111"/>
        <end position="1117"/>
    </location>
</feature>
<feature type="region of interest" description="Necessary for ssDNA and DNA Holliday junction binding" evidence="2">
    <location>
        <begin position="1179"/>
        <end position="1196"/>
    </location>
</feature>
<feature type="region of interest" description="Disordered" evidence="6">
    <location>
        <begin position="1251"/>
        <end position="1364"/>
    </location>
</feature>
<feature type="short sequence motif" description="DEAH box">
    <location>
        <begin position="747"/>
        <end position="750"/>
    </location>
</feature>
<feature type="short sequence motif" description="Nuclear localization signal" evidence="1">
    <location>
        <begin position="1285"/>
        <end position="1301"/>
    </location>
</feature>
<feature type="compositionally biased region" description="Low complexity" evidence="6">
    <location>
        <begin position="387"/>
        <end position="399"/>
    </location>
</feature>
<feature type="compositionally biased region" description="Polar residues" evidence="6">
    <location>
        <begin position="484"/>
        <end position="503"/>
    </location>
</feature>
<feature type="compositionally biased region" description="Basic and acidic residues" evidence="6">
    <location>
        <begin position="555"/>
        <end position="566"/>
    </location>
</feature>
<feature type="compositionally biased region" description="Polar residues" evidence="6">
    <location>
        <begin position="567"/>
        <end position="580"/>
    </location>
</feature>
<feature type="compositionally biased region" description="Polar residues" evidence="6">
    <location>
        <begin position="1273"/>
        <end position="1282"/>
    </location>
</feature>
<feature type="compositionally biased region" description="Basic residues" evidence="6">
    <location>
        <begin position="1283"/>
        <end position="1300"/>
    </location>
</feature>
<feature type="compositionally biased region" description="Polar residues" evidence="6">
    <location>
        <begin position="1306"/>
        <end position="1335"/>
    </location>
</feature>
<feature type="binding site" evidence="2">
    <location>
        <begin position="620"/>
        <end position="624"/>
    </location>
    <ligand>
        <name>ATP</name>
        <dbReference type="ChEBI" id="CHEBI:30616"/>
    </ligand>
</feature>
<feature type="binding site" evidence="2">
    <location>
        <begin position="644"/>
        <end position="648"/>
    </location>
    <ligand>
        <name>ATP</name>
        <dbReference type="ChEBI" id="CHEBI:30616"/>
    </ligand>
</feature>
<feature type="binding site" evidence="2">
    <location>
        <position position="934"/>
    </location>
    <ligand>
        <name>ATP</name>
        <dbReference type="ChEBI" id="CHEBI:30616"/>
    </ligand>
</feature>
<feature type="binding site" evidence="2">
    <location>
        <position position="988"/>
    </location>
    <ligand>
        <name>Zn(2+)</name>
        <dbReference type="ChEBI" id="CHEBI:29105"/>
    </ligand>
</feature>
<feature type="binding site" evidence="2">
    <location>
        <position position="1007"/>
    </location>
    <ligand>
        <name>Zn(2+)</name>
        <dbReference type="ChEBI" id="CHEBI:29105"/>
    </ligand>
</feature>
<feature type="binding site" evidence="2">
    <location>
        <position position="1015"/>
    </location>
    <ligand>
        <name>Zn(2+)</name>
        <dbReference type="ChEBI" id="CHEBI:29105"/>
    </ligand>
</feature>
<feature type="binding site" evidence="2">
    <location>
        <position position="1018"/>
    </location>
    <ligand>
        <name>Zn(2+)</name>
        <dbReference type="ChEBI" id="CHEBI:29105"/>
    </ligand>
</feature>
<feature type="binding site" evidence="2">
    <location>
        <position position="1194"/>
    </location>
    <ligand>
        <name>ATP</name>
        <dbReference type="ChEBI" id="CHEBI:30616"/>
    </ligand>
</feature>
<feature type="site" description="3' overhang DNA-binding" evidence="2">
    <location>
        <position position="669"/>
    </location>
</feature>
<feature type="site" description="3' overhang DNA-binding" evidence="2">
    <location>
        <position position="760"/>
    </location>
</feature>
<feature type="site" description="3' overhang DNA-binding; via amide nitrogen" evidence="2">
    <location>
        <position position="872"/>
    </location>
</feature>
<feature type="site" description="3' overhang DNA-binding" evidence="2">
    <location>
        <position position="898"/>
    </location>
</feature>
<feature type="site" description="3' overhang DNA-binding" evidence="2">
    <location>
        <position position="920"/>
    </location>
</feature>
<feature type="site" description="3' overhang DNA-binding" evidence="2">
    <location>
        <position position="1061"/>
    </location>
</feature>
<evidence type="ECO:0000250" key="1"/>
<evidence type="ECO:0000250" key="2">
    <source>
        <dbReference type="UniProtKB" id="P54132"/>
    </source>
</evidence>
<evidence type="ECO:0000255" key="3">
    <source>
        <dbReference type="PROSITE-ProRule" id="PRU00328"/>
    </source>
</evidence>
<evidence type="ECO:0000255" key="4">
    <source>
        <dbReference type="PROSITE-ProRule" id="PRU00541"/>
    </source>
</evidence>
<evidence type="ECO:0000255" key="5">
    <source>
        <dbReference type="PROSITE-ProRule" id="PRU00542"/>
    </source>
</evidence>
<evidence type="ECO:0000256" key="6">
    <source>
        <dbReference type="SAM" id="MobiDB-lite"/>
    </source>
</evidence>
<evidence type="ECO:0000269" key="7">
    <source>
    </source>
</evidence>
<evidence type="ECO:0000305" key="8"/>
<comment type="function">
    <text evidence="2 7">ATP-dependent DNA helicase that unwinds single- and double-stranded DNA in a 3'-5' direction. Participates in DNA replication and repair (PubMed:11040210). Involved in 5'-end resection of DNA during double-strand break (DSB) repair. Negatively regulates sister chromatid exchange (SCE). Stimulates DNA 4-way junction branch migration and DNA Holliday junction dissolution. Binds single-stranded DNA (ssDNA), forked duplex DNA and DNA Holliday junction.</text>
</comment>
<comment type="catalytic activity">
    <reaction evidence="2">
        <text>Couples ATP hydrolysis with the unwinding of duplex DNA by translocating in the 3'-5' direction.</text>
        <dbReference type="EC" id="5.6.2.4"/>
    </reaction>
</comment>
<comment type="catalytic activity">
    <reaction evidence="2">
        <text>ATP + H2O = ADP + phosphate + H(+)</text>
        <dbReference type="Rhea" id="RHEA:13065"/>
        <dbReference type="ChEBI" id="CHEBI:15377"/>
        <dbReference type="ChEBI" id="CHEBI:15378"/>
        <dbReference type="ChEBI" id="CHEBI:30616"/>
        <dbReference type="ChEBI" id="CHEBI:43474"/>
        <dbReference type="ChEBI" id="CHEBI:456216"/>
    </reaction>
</comment>
<comment type="cofactor">
    <cofactor evidence="2">
        <name>Zn(2+)</name>
        <dbReference type="ChEBI" id="CHEBI:29105"/>
    </cofactor>
    <text evidence="2">Binds 1 zinc ion per subunit.</text>
</comment>
<comment type="subunit">
    <text evidence="2">Monomer. Homodimer (via N-terminus). Homotetramer (via N-terminus); dimer of dimers. Homohexamer (via N-terminus). Self-association negatively regulates DNA unwinding amplitude and rate. Oligomer complexes dissociate into monomer in presence of ATP.</text>
</comment>
<comment type="subcellular location">
    <subcellularLocation>
        <location evidence="1">Nucleus</location>
    </subcellularLocation>
</comment>
<comment type="domain">
    <text evidence="2">The N-terminal region mediates dimerization and homooligomerization. Both the helicase ATP-binding domain and the helicase C-terminal domain form intramolecular interactions with the HRDC domain in a ATP-dependent manner. The HRDC domain is required for single-stranded DNA (ssDNA) and DNA Holliday junction binding.</text>
</comment>
<comment type="similarity">
    <text evidence="8">Belongs to the helicase family. RecQ subfamily.</text>
</comment>
<sequence>MAALPQNNLQKQLELFPAKGTSNKLSLQKTKSSVFTFKKKCSPNVSASTGFIPFQQHVLKDKNVNVKQDGTHTALPKATERNKINCFFTPVYTKSGQPPQVVALKDHVHGNDSANKPPSTEDAASKKTGINTSFGSVTSLEEWDDLDDFDTSVSPPKSHAGKGGKTPQKCKNTSPVASFKIQSISPEGPTTEKHDCAKLLYDNNEVASEPRKNLHAKTAESPDQSLVCLASVEPTNLERDMCRNTDYLGTDDLEHDQETLSQVLIEEEDDCEPDFIPPSPSDESLSSPPVLKVISAQRKHKVSSLTDVNDCENTTDHLQGQSVSTSLDSKVPSQLLTLMLEICDLVDKIPISELHVLSCGLDLKKKRDMRKRLLSNDSVFRSSPADSSTVSLTSCTSSTQNRDFNVNAPKGAESLSGSSVSKVFKFNKLAVHDIGTKESENSANSAPNFMEKIGNKTSFSFRAGGDSIMENSFNFHSSVLSNSRFNTPQNEKPISSSTCTRPYSQPIDDMDNPDLDFDIDNFDIEDLDDIHCLDSPAAPSVSSKNVPQYPTIREAQLDSRNKEKNTRNNTGDTTNPSLLSDSLLKPQIENPAHERFRGFNFPHSKEMMKIFHKKFGLHRFRTNQLEAINACLCGEDCFILMPTGGGKSLCYQLPGCISPGVTIVISPLRSLIVDQVQKLTSLDIPATYLTGDKTDAEAASIYLQLSKKDPIIKLLYVTPEKVCASTRLISTMENLYERQLLARFVIDEAHCVSQWGHDFRPDYKRLNVLRQKFQSVPMMALTATANPRVKKDILNQLKMTKPQIFTMSFNRDNLKYEVLPKKPKRVALDCVEWIKKHHPNDSGIIYCLSRHECDTMADTLQKEGLAALAYHAGLADSNRDYVQHKWINQDDCQVICATIAFGMGIDKPDVRYVIHASLPKSVEGYYQESGRAGRDGETSHCLLFYSYHDVTRIRRLIQMEKDGNSHTKQTHFNNLYSMVHYCENVVECRRMQLLSYFGENNFNPNFCKEHTQVACDNCLGKKNYKSRDVTDDVGNIVRFVQDNCSLVQGRGKGRSNNTRLTLNMMVDIFLGSKSAKIQTGLFGKGAAYSRHNAERLFRKLVLDRIIDEELYITFNDQAVAYVKMGERAQAVLNGFLKVDFQDTESASSIRKQKASVVTNTSQREEMVKKCQAELTELCKRLGKIFGVHYFNIFNTATIRRIAESLSPEPEVLLQIDGVTEDKLDKYGAELIDVLQKYSEWTLPVEDICQKSGGPANVSARRSNSDHDDESCDKSSYFSSNNKKGPKRKNSSYFGKSKKRKTGGDGQQSRSKNGNSSYARKNSTAKTSSSYISGSKTGADKRPGFMAPPMPQPNRRFLKPSYSMF</sequence>
<accession>Q9DEY9</accession>
<keyword id="KW-0067">ATP-binding</keyword>
<keyword id="KW-0227">DNA damage</keyword>
<keyword id="KW-0234">DNA repair</keyword>
<keyword id="KW-0235">DNA replication</keyword>
<keyword id="KW-0238">DNA-binding</keyword>
<keyword id="KW-0347">Helicase</keyword>
<keyword id="KW-0378">Hydrolase</keyword>
<keyword id="KW-0413">Isomerase</keyword>
<keyword id="KW-0479">Metal-binding</keyword>
<keyword id="KW-0547">Nucleotide-binding</keyword>
<keyword id="KW-0539">Nucleus</keyword>
<keyword id="KW-1185">Reference proteome</keyword>
<keyword id="KW-0862">Zinc</keyword>
<reference key="1">
    <citation type="journal article" date="2000" name="Genes Dev.">
        <title>The function of Xenopus Bloom's syndrome protein homolog (xBLM) in DNA replication.</title>
        <authorList>
            <person name="Liao S."/>
            <person name="Graham J."/>
            <person name="Yan H."/>
        </authorList>
    </citation>
    <scope>NUCLEOTIDE SEQUENCE [MRNA]</scope>
    <scope>FUNCTION</scope>
    <source>
        <tissue>Oocyte</tissue>
    </source>
</reference>
<organism>
    <name type="scientific">Xenopus laevis</name>
    <name type="common">African clawed frog</name>
    <dbReference type="NCBI Taxonomy" id="8355"/>
    <lineage>
        <taxon>Eukaryota</taxon>
        <taxon>Metazoa</taxon>
        <taxon>Chordata</taxon>
        <taxon>Craniata</taxon>
        <taxon>Vertebrata</taxon>
        <taxon>Euteleostomi</taxon>
        <taxon>Amphibia</taxon>
        <taxon>Batrachia</taxon>
        <taxon>Anura</taxon>
        <taxon>Pipoidea</taxon>
        <taxon>Pipidae</taxon>
        <taxon>Xenopodinae</taxon>
        <taxon>Xenopus</taxon>
        <taxon>Xenopus</taxon>
    </lineage>
</organism>
<gene>
    <name type="primary">blm</name>
</gene>